<sequence>MNNQRKKARSTPFNMLKRERNRVSTVQQLTKRFSLGMLQGRGPLKLFMALVAFLRFLTIPPTAGILKRWGTIKKSKAINVLRGFRKEIGRMLNILNRRRRTAGVIIMLIPTAMAFHLTTRNGEPHMIVGRQEKGKSLLFKTEDGVNMCTLMAIDLGELCEDTITYKCPLLRQNEPEDIDCWCNSTSTWVTYGTCATTGEHRREKRSVALVPHVGMGLETRTETWMSSEGAWKHVQRIETWILRHPGFTIMAAILAYTIGTTHFQRALIFILLTAVAPSMTMRCIGISNRDFVEGVSGGSWVDIVLEHGSCVTTMAKNKPTLDFELIKTEAKQPATLRKYCIEAKLTNTTTESRCPTQGEPSLNEEQDKRFLCKHSMVDRGWGNGCGLFGKGGIVTCAMFTCKKNMEGKVVLPENLEYTIVITPHSGEEHAVGNDTGKHGKEIKITPQSSITEAELTGYGTVTMECSPRTGLDFNEMVLLQMEDKAWLVHRQWFLDLPLPWLPGADTQGSNWIQKETLVTFKNPHAKKQDVVVLGSQEGAMHTALTGATEIQMSSGNLLFTGHLKCRLRMDKLQLKGMSYSMCTGKFKIVKEIAETQHGTIVIRVQYEGDGSPCKIPFEIMDLEKRHVLGRLITVNPIVTEKDSPVNIEAEPPFGDSYIIIGVEPGQLKLNWFKKGSSIGQMFETTMRGAKRMAILGDTAWDFGSLGGVFTSIGKALHQVFGAIYGAAFSGVSWTMKILIGVIITWIGMNSRSTSLSVSLVLVGVVTLYLGAMVQADSGCVVSWKNKELKCGSGIFITDNVHTWTEQYKFQPESPSKLASAIQKAHEEGICGIRSVTRLENLMWKQITPELNHILSENEVKLTIMTGDIKGIMQAGKRSLRPQPTELKYSWKTWGKAKMLSTESHNQTFLIDGPETAECPNTNRAWNSLEVEDYGFGVFTTNIWLKLREKQDVFCDSKLMSAAIKDNRAVHADMGYWIESALNDTWKMEKASFIEVKSCHWPKSHTLWSNGVLESEMIIPKNFAGPVSQHNYRPGYHTQTAGPWHLGKLEMDFDFCEGTTVVVTEDCGNRGPSLRTTTASGKLITEWCCRSCTLPPLRYRGEDGCWYGMEIRPLKEKEENLVNSLVTAGHGQIDNFSLGVLGMALFLEEMLRTRVGTKHAILLVAVSFVTLITGNMSFRDLGRVMVMVGATMTDDIGMGVTYLALLAAFKVRPTFAAGLLLRKLTSKELMMATIGIALLSQSTIPETILELTDALALGMMVLKIVRNMEKYQLAVTIMAILCVPNAVILQNAWKVSCTILAAVSVSPLLLTSSQQKADWIPLALTIKGLNPTAIFLTTLSRTSKKRSWPLNEAIMAVGMVSILASSLLKNDIPMTGPLVAGGLLTVCYVLTGRSADLELERAADVKWEDQAEISGSSPILSITISEDGSMSIKNEEEEQTLTILIRTGLLVISGVFPVSIPITAAAWYLWEVKKQRAGVLWDVPSPPPVGKAELEDGAYRIKQRGILGYSQIGAGVYKEGTFHTMWHVTRGAVLMHKGKRIEPSWADVKKDLISYGGGWKLEGEWKEGEEVQVLALEPGKNPRAVQTKPGLFKTNTGTIGAVSLDFSPGTSGSPIVDRKGKVVGLYGNGVVTRSGAYVSAIAQTEKSIEDNPEIEDDIFRKKRLTIMDLHPGAGKTKRYLPAIVREAIKRGLRTLILAPTRVVAAEMEEALRGLPIRYQTPAIRAEHTGREIVDLMCHATFTMRLLSPVRVPNYNLIIMDEAHFTDPASIAARGYISTRVEMGEAAGIFMTATPPGSRDPFPQSNAPIMDEEREIPERSWNSGHEWVTDFKGKTVWFVPSIKAGNDIAACLRKNGKKVIQLSRKTFDSEYVKTRANDWDFVVTTDISEMGANFKAERVIDPRRCMKPVILTDGEERVILAGPMPVTHSSAAQRRGRIGRNPKNENDQYIYMGEPLENDEDCAHWKEAKMLLDNINTPEGIIPSMFEPEREKVDAIDGEYRLRGEARKTFVDLMRRGDLPVWLAYRVAAEGINYADRRWCFDGIKNNQILEENVEVEIWTKEGERKKLKPRWLDARIYSDPLALKEFKEFAAGRKSLTLNLITEMGRLPTFMTQKARDALDNLAVLHTAEAGGRAYNHALSELPETLETLLLLTLLATVTGGIFLFLMSGKGIGKMTLGMCCIITASILLWYAQIQPHWIAASIILEFFLIVLLIPEPEKQRTPQDNQLTYVVIAILTVVAATMANEMGFLEKTKKDLGLGSITTQESESNILDIDLRPASAWTLYAVATTFVTPMLRHSIENSSVNVSLTAIANQATVLMGLGKGWPLSKIHIGVPLLAIGCYSQVNPITLTAALLLLVAHYAIIGPGLQAKATREAQKRAAAGIMKNPTVDGITVIDLDPIPYDPKFEKQLGQVMLLILCVTQVLMMRTTWALCEALTLATGPISTLWEGNPGRFWNTTIAVSMANIFRGSYLAGAGLLFSIMKNTTNTRRGTGNIGETLGEKWKSRLNALGKSEFQIYKKSGIQEVDRTLAKEGIKRGETDHHAVSRGSAKLRWFVERNMVTPEGKVVDLGCGRGGWSYYCGGLKNVREVKGLTKGGPGHEEPIPMSTYGWNLVRLQSGVDVFFTPPEKCDTLLCDIGESSPNPTIEAGRTLRVLNLVENWLNNNTQFCIKVLNPYMPSVIEKMETLQRKYGGALVRNPLSRNSTHEMYWVSNASGNIVSSVNMISRMLINRFTMKHKKATYETDVDLGSGTRNIGIESEIPNLDIIGKRIEKIKQEHETSWHYDQDHPYKTWAYHGSYETKQTGSASSMVNGVVRLLTKPWDVVPMVTQMAMTDTTPFGQQRVFKEKVDTRTQEPKEGTKKLMKITAEWLWKELGKKKTPRMCTREEFTRKVRSNAALGAIFTDENKWKSAREAVEDSRFWELVDRERNLHLEGKCETCVYNMMGKREKKLGEFGKAKGSRAIWYMWLGARFLEFEALGFLNEDHWFSRGNSLSGVEGEGLHKLGYILRDVSKKEGGAMYADDTAGWDTRITLEDLKNEEMVTNHMEGEHKKLAEAIFKLTYQNKVVRVQRPTPRGTVMDIISRRDQRGSGQVGTYGLNTFTNMEAQLIRQMEGEGIFKSIQHLTVTEEIAVQNWLARVGRERLSRMAISGDDCVVKPLDDRFASALTALNDMGKVRKDIQQWEPSRGWNDWTQVPFCSHHFHELVMKDGRVLVVPCRNQDELIGRARISQGAGWSLKETACLGKSYAQMWTLMYFHRRDLRLAANAICSAVPSHWVPTSRTTWSIHAKHEWMTTEDMLAVWNRVWIQENPWMEDKTPVESWEEVPYLGKREDQWCGSLIGLTSRATWAKNIQTAINQVRSLIGNEEYTDYMPSMKRFRREEEEAGVLW</sequence>
<comment type="function">
    <molecule>Capsid protein C</molecule>
    <text evidence="5">Plays a role in virus budding by binding to the cell membrane and gathering the viral RNA into a nucleocapsid that forms the core of a mature virus particle. During virus entry, may induce genome penetration into the host cytoplasm after hemifusion induced by the surface proteins. Can migrate to the cell nucleus where it modulates host functions. Overcomes the anti-viral effects of host EXOC1 by sequestering and degrading the latter through the proteasome degradation pathway.</text>
</comment>
<comment type="function">
    <molecule>Capsid protein C</molecule>
    <text evidence="1">Inhibits RNA silencing by interfering with host Dicer.</text>
</comment>
<comment type="function">
    <molecule>Peptide pr</molecule>
    <text evidence="5">Prevents premature fusion activity of envelope proteins in trans-Golgi by binding to envelope protein E at pH6.0. After virion release in extracellular space, gets dissociated from E dimers.</text>
</comment>
<comment type="function">
    <molecule>Protein prM</molecule>
    <text evidence="5">Acts as a chaperone for envelope protein E during intracellular virion assembly by masking and inactivating envelope protein E fusion peptide. prM is the only viral peptide matured by host furin in the trans-Golgi network probably to avoid catastrophic activation of the viral fusion activity in acidic Golgi compartment prior to virion release. prM-E cleavage is inefficient, and many virions are only partially matured. These uncleaved prM would play a role in immune evasion.</text>
</comment>
<comment type="function">
    <molecule>Small envelope protein M</molecule>
    <text evidence="5">May play a role in virus budding. Exerts cytotoxic effects by activating a mitochondrial apoptotic pathway through M ectodomain. May display a viroporin activity.</text>
</comment>
<comment type="function">
    <molecule>Envelope protein E</molecule>
    <text evidence="5">Binds to host cell surface receptor and mediates fusion between viral and cellular membranes. Envelope protein is synthesized in the endoplasmic reticulum in the form of heterodimer with protein prM. They play a role in virion budding in the ER, and the newly formed immature particle is covered with 60 spikes composed of heterodimer between precursor prM and envelope protein E. The virion is transported to the Golgi apparatus where the low pH causes dissociation of PrM-E heterodimers and formation of E homodimers. prM-E cleavage is inefficient, and many virions are only partially matured. These uncleaved prM would play a role in immune evasion.</text>
</comment>
<comment type="function">
    <molecule>Non-structural protein 1</molecule>
    <text evidence="10">Involved in immune evasion, pathogenesis and viral replication. Once cleaved off the polyprotein, is targeted to three destinations: the viral replication cycle, the plasma membrane and the extracellular compartment. Essential for viral replication. Required for formation of the replication complex and recruitment of other non-structural proteins to the ER-derived membrane structures. Excreted as a hexameric lipoparticle that plays a role against host immune response. Antagonizing the complement function. Binds to the host macrophages and dendritic cells. Inhibits signal transduction originating from Toll-like receptor 3 (TLR3).</text>
</comment>
<comment type="function">
    <molecule>Non-structural protein 1</molecule>
    <text evidence="5 6">Involved in immune evasion, pathogenesis and viral replication. Once cleaved off the polyprotein, is targeted to three destinations: the viral replication cycle, the plasma membrane and the extracellular compartment. Essential for viral replication. Required for formation of the replication complex and recruitment of other non-structural proteins to the ER-derived membrane structures. Excreted as a hexameric lipoparticle that plays a role against host immune response. Antagonizing the complement function. Binds to the host macrophages and dendritic cells. Inhibits signal transduction originating from Toll-like receptor 3 (TLR3). Mediates complement activation, which may contribute to the pathogenesis of the vascular leakage that occurs in severe dengue disease. Activates autophagy through the AMPK/ERK/mTOR signaling pathway. Mechanistically, acts as the assembly platform for STK11-AMPK interactions and promotes STK11-AMPK interactions. In turn, promotes phosphorylation of the AMPK kinase structural domain and activates AMPK, thereby positively regulating the AMPK/ERK/mTOR signaling pathway and inducing autophagy.</text>
</comment>
<comment type="function">
    <molecule>Non-structural protein 2A</molecule>
    <text evidence="5">Component of the viral RNA replication complex that functions in virion assembly and antagonizes the host immune response.</text>
</comment>
<comment type="function">
    <molecule>Serine protease subunit NS2B</molecule>
    <text evidence="5 16">Required cofactor for the serine protease function of NS3. May have membrane-destabilizing activity and form viroporins (By similarity).</text>
</comment>
<comment type="function">
    <molecule>Serine protease NS3</molecule>
    <text evidence="17">Displays three enzymatic activities: serine protease, NTPase and RNA helicase. NS3 serine protease, in association with NS2B, performs its autocleavage and cleaves the polyprotein at dibasic sites in the cytoplasm: C-prM, NS2A-NS2B, NS2B-NS3, NS3-NS4A, NS4A-2K and NS4B-NS5. NS3 RNA helicase binds RNA and unwinds dsRNA in the 3' to 5' direction.</text>
</comment>
<comment type="function">
    <molecule>Non-structural protein 4A</molecule>
    <text evidence="5 7 10">Regulates the ATPase activity of the NS3 helicase activity. NS4A allows NS3 helicase to conserve energy during unwinding. Plays a role in the inhibition of the host innate immune response. Interacts with host MAVS and thereby prevents the interaction between RIGI and MAVS. In turn, IFN-beta production is impaired. Interacts with host AUP1 which mediates induction of lipophagy in host cells and facilitates production of virus progeny particles (By similarity).</text>
</comment>
<comment type="function">
    <molecule>Peptide 2k</molecule>
    <text evidence="5">Functions as a signal peptide for NS4B and is required for the interferon antagonism activity of the latter.</text>
</comment>
<comment type="function">
    <molecule>Non-structural protein 4B</molecule>
    <text evidence="10">Induces the formation of ER-derived membrane vesicles where the viral replication takes place. Inhibits interferon (IFN)-induced host STAT1 phosphorylation and nuclear translocation, thereby preventing the establishment of cellular antiviral state by blocking the IFN-alpha/beta pathway.</text>
</comment>
<comment type="function">
    <molecule>RNA-directed RNA polymerase NS5</molecule>
    <text evidence="5 6">Replicates the viral (+) and (-) RNA genome, and performs the capping of genomes in the cytoplasm. NS5 methylates viral RNA cap at guanine N-7 and ribose 2'-O positions. Besides its role in RNA genome replication, also prevents the establishment of cellular antiviral state by blocking the interferon-alpha/beta (IFN-alpha/beta) signaling pathway. Inhibits host TYK2 and STAT2 phosphorylation, thereby preventing activation of JAK-STAT signaling pathway (By similarity). May reduce immune responses by preventing the recruitment of the host PAF1 complex to interferon-responsive genes (By similarity).</text>
</comment>
<comment type="catalytic activity">
    <reaction>
        <text>Selective hydrolysis of -Xaa-Xaa-|-Yaa- bonds in which each of the Xaa can be either Arg or Lys and Yaa can be either Ser or Ala.</text>
        <dbReference type="EC" id="3.4.21.91"/>
    </reaction>
</comment>
<comment type="catalytic activity">
    <reaction evidence="13">
        <text>RNA(n) + a ribonucleoside 5'-triphosphate = RNA(n+1) + diphosphate</text>
        <dbReference type="Rhea" id="RHEA:21248"/>
        <dbReference type="Rhea" id="RHEA-COMP:14527"/>
        <dbReference type="Rhea" id="RHEA-COMP:17342"/>
        <dbReference type="ChEBI" id="CHEBI:33019"/>
        <dbReference type="ChEBI" id="CHEBI:61557"/>
        <dbReference type="ChEBI" id="CHEBI:140395"/>
        <dbReference type="EC" id="2.7.7.48"/>
    </reaction>
</comment>
<comment type="catalytic activity">
    <reaction>
        <text>a ribonucleoside 5'-triphosphate + H2O = a ribonucleoside 5'-diphosphate + phosphate + H(+)</text>
        <dbReference type="Rhea" id="RHEA:23680"/>
        <dbReference type="ChEBI" id="CHEBI:15377"/>
        <dbReference type="ChEBI" id="CHEBI:15378"/>
        <dbReference type="ChEBI" id="CHEBI:43474"/>
        <dbReference type="ChEBI" id="CHEBI:57930"/>
        <dbReference type="ChEBI" id="CHEBI:61557"/>
        <dbReference type="EC" id="3.6.1.15"/>
    </reaction>
</comment>
<comment type="catalytic activity">
    <reaction>
        <text>ATP + H2O = ADP + phosphate + H(+)</text>
        <dbReference type="Rhea" id="RHEA:13065"/>
        <dbReference type="ChEBI" id="CHEBI:15377"/>
        <dbReference type="ChEBI" id="CHEBI:15378"/>
        <dbReference type="ChEBI" id="CHEBI:30616"/>
        <dbReference type="ChEBI" id="CHEBI:43474"/>
        <dbReference type="ChEBI" id="CHEBI:456216"/>
        <dbReference type="EC" id="3.6.4.13"/>
    </reaction>
</comment>
<comment type="catalytic activity">
    <reaction evidence="18">
        <text>a 5'-end (5'-triphosphoguanosine)-ribonucleoside in mRNA + S-adenosyl-L-methionine = a 5'-end (N(7)-methyl 5'-triphosphoguanosine)-ribonucleoside in mRNA + S-adenosyl-L-homocysteine</text>
        <dbReference type="Rhea" id="RHEA:67008"/>
        <dbReference type="Rhea" id="RHEA-COMP:17166"/>
        <dbReference type="Rhea" id="RHEA-COMP:17167"/>
        <dbReference type="ChEBI" id="CHEBI:57856"/>
        <dbReference type="ChEBI" id="CHEBI:59789"/>
        <dbReference type="ChEBI" id="CHEBI:156461"/>
        <dbReference type="ChEBI" id="CHEBI:167617"/>
        <dbReference type="EC" id="2.1.1.56"/>
    </reaction>
</comment>
<comment type="catalytic activity">
    <reaction evidence="18">
        <text>a 5'-end (N(7)-methyl 5'-triphosphoguanosine)-ribonucleoside in mRNA + S-adenosyl-L-methionine = a 5'-end (N(7)-methyl 5'-triphosphoguanosine)-(2'-O-methyl-ribonucleoside) in mRNA + S-adenosyl-L-homocysteine + H(+)</text>
        <dbReference type="Rhea" id="RHEA:67020"/>
        <dbReference type="Rhea" id="RHEA-COMP:17167"/>
        <dbReference type="Rhea" id="RHEA-COMP:17168"/>
        <dbReference type="ChEBI" id="CHEBI:15378"/>
        <dbReference type="ChEBI" id="CHEBI:57856"/>
        <dbReference type="ChEBI" id="CHEBI:59789"/>
        <dbReference type="ChEBI" id="CHEBI:156461"/>
        <dbReference type="ChEBI" id="CHEBI:167609"/>
        <dbReference type="EC" id="2.1.1.57"/>
    </reaction>
</comment>
<comment type="subunit">
    <molecule>Capsid protein C</molecule>
    <text evidence="5">Homodimer. Interacts (via N-terminus) with host EXOC1 (via C-terminus); this interaction results in EXOC1 degradation through the proteasome degradation pathway.</text>
</comment>
<comment type="subunit">
    <molecule>Protein prM</molecule>
    <text evidence="5">Forms heterodimers with envelope protein E in the endoplasmic reticulum and Golgi.</text>
</comment>
<comment type="subunit">
    <molecule>Envelope protein E</molecule>
    <text evidence="5">Homodimer; in the endoplasmic reticulum and Golgi. Interacts with protein prM. Interacts with non-structural protein 1.</text>
</comment>
<comment type="subunit">
    <molecule>Non-structural protein 1</molecule>
    <text evidence="5 6">Homodimer; Homohexamer when secreted. Interacts with envelope protein E (By similarity). Interacts with host PRKAA1 (By similarity).</text>
</comment>
<comment type="subunit">
    <molecule>Non-structural protein 2A</molecule>
    <text evidence="5">Interacts (via N-terminus) with serine protease NS3.</text>
</comment>
<comment type="subunit">
    <molecule>Serine protease subunit NS2B</molecule>
    <text evidence="5">Forms a heterodimer with serine protease NS3. May form homooligomers.</text>
</comment>
<comment type="subunit">
    <molecule>Serine protease NS3</molecule>
    <text evidence="5">Forms a heterodimer with NS2B. Interacts with NS4B. Interacts with unphosphorylated RNA-directed RNA polymerase NS5; this interaction stimulates RNA-directed RNA polymerase NS5 guanylyltransferase activity. Interacts with host SHFL.</text>
</comment>
<comment type="subunit">
    <molecule>Non-structural protein 4A</molecule>
    <text evidence="5 6 7">Interacts with host MAVS; this interaction inhibits the synthesis of IFN-beta. Interacts with host SHFL (By similarity). Interacts with host AUP1; the interaction occurs in the presence of Dengue virus NS4B and induces lipophagy which facilitates production of virus progeny particles (By similarity). May interact with host SRPRA and SEC61G (By similarity).</text>
</comment>
<comment type="subunit">
    <molecule>Non-structural protein 4B</molecule>
    <text evidence="5">Interacts with serine protease NS3.</text>
</comment>
<comment type="subunit">
    <molecule>RNA-directed RNA polymerase NS5</molecule>
    <text evidence="5 6">Homodimer. Interacts with host STAT2; this interaction inhibits the phosphorylation of the latter, and, when all viral proteins are present (polyprotein), targets STAT2 for degradation. Interacts with serine protease NS3 (By similarity). Interacts with host PAF1 complex; the interaction may prevent the recruitment of the PAF1 complex to interferon-responsive genes, and thus reduces the immune response (By similarity).</text>
</comment>
<comment type="subcellular location">
    <molecule>Capsid protein C</molecule>
    <subcellularLocation>
        <location evidence="5">Virion</location>
    </subcellularLocation>
    <subcellularLocation>
        <location evidence="5">Host nucleus</location>
    </subcellularLocation>
    <subcellularLocation>
        <location evidence="5">Host cytoplasm</location>
    </subcellularLocation>
    <subcellularLocation>
        <location evidence="5">Host cytoplasm</location>
        <location evidence="5">Host perinuclear region</location>
    </subcellularLocation>
</comment>
<comment type="subcellular location">
    <molecule>Peptide pr</molecule>
    <subcellularLocation>
        <location evidence="5">Secreted</location>
    </subcellularLocation>
</comment>
<comment type="subcellular location">
    <molecule>Small envelope protein M</molecule>
    <subcellularLocation>
        <location evidence="5">Virion membrane</location>
        <topology evidence="11">Multi-pass membrane protein</topology>
    </subcellularLocation>
    <subcellularLocation>
        <location evidence="5">Host endoplasmic reticulum membrane</location>
        <topology evidence="11">Multi-pass membrane protein</topology>
    </subcellularLocation>
</comment>
<comment type="subcellular location">
    <molecule>Envelope protein E</molecule>
    <subcellularLocation>
        <location evidence="5">Virion membrane</location>
        <topology evidence="11">Multi-pass membrane protein</topology>
    </subcellularLocation>
    <subcellularLocation>
        <location evidence="5">Host endoplasmic reticulum membrane</location>
        <topology evidence="11">Multi-pass membrane protein</topology>
    </subcellularLocation>
</comment>
<comment type="subcellular location">
    <molecule>Non-structural protein 1</molecule>
    <subcellularLocation>
        <location evidence="5">Secreted</location>
    </subcellularLocation>
    <subcellularLocation>
        <location evidence="6">Host cytoplasm</location>
    </subcellularLocation>
    <subcellularLocation>
        <location>Host endoplasmic reticulum membrane</location>
        <topology>Peripheral membrane protein</topology>
        <orientation evidence="5">Lumenal side</orientation>
    </subcellularLocation>
    <text evidence="10">Located in RE-derived vesicles hosting the replication complex.</text>
</comment>
<comment type="subcellular location">
    <molecule>Non-structural protein 2A</molecule>
    <subcellularLocation>
        <location evidence="5">Host endoplasmic reticulum membrane</location>
        <topology evidence="5">Multi-pass membrane protein</topology>
    </subcellularLocation>
</comment>
<comment type="subcellular location">
    <molecule>Serine protease subunit NS2B</molecule>
    <subcellularLocation>
        <location>Host endoplasmic reticulum membrane</location>
        <topology evidence="5">Multi-pass membrane protein</topology>
    </subcellularLocation>
</comment>
<comment type="subcellular location">
    <molecule>Serine protease NS3</molecule>
    <subcellularLocation>
        <location evidence="17">Host endoplasmic reticulum membrane</location>
        <topology evidence="17">Peripheral membrane protein</topology>
        <orientation evidence="17">Cytoplasmic side</orientation>
    </subcellularLocation>
    <text evidence="17">Remains non-covalently associated to serine protease subunit NS2B.</text>
</comment>
<comment type="subcellular location">
    <molecule>Non-structural protein 4A</molecule>
    <subcellularLocation>
        <location evidence="5">Host endoplasmic reticulum membrane</location>
        <topology evidence="5">Multi-pass membrane protein</topology>
    </subcellularLocation>
    <subcellularLocation>
        <location evidence="5">Host mitochondrion</location>
    </subcellularLocation>
    <text evidence="5">Located in RE-associated vesicles hosting the replication complex. Interacts with host MAVS in the mitochondrion-associated endoplasmic reticulum membranes.</text>
</comment>
<comment type="subcellular location">
    <molecule>Non-structural protein 4B</molecule>
    <subcellularLocation>
        <location evidence="5">Host endoplasmic reticulum membrane</location>
        <topology evidence="5">Multi-pass membrane protein</topology>
    </subcellularLocation>
    <text evidence="10">Located in RE-derived vesicles hosting the replication complex.</text>
</comment>
<comment type="subcellular location">
    <molecule>RNA-directed RNA polymerase NS5</molecule>
    <subcellularLocation>
        <location>Host endoplasmic reticulum membrane</location>
        <topology>Peripheral membrane protein</topology>
        <orientation>Cytoplasmic side</orientation>
    </subcellularLocation>
    <subcellularLocation>
        <location evidence="5">Host nucleus</location>
    </subcellularLocation>
    <text evidence="5">Located in RE-associated vesicles hosting the replication complex. NS5 protein is mainly localized in the nucleus rather than in ER vesicles, especially in the DENV 2, 3, 4 serotypes.</text>
</comment>
<comment type="domain">
    <text evidence="5">The transmembrane domains of the small envelope protein M and envelope protein E contain an endoplasmic reticulum retention signal.</text>
</comment>
<comment type="PTM">
    <molecule>Genome polyprotein</molecule>
    <text evidence="5">Specific enzymatic cleavages in vivo yield mature proteins. Cleavages in the lumen of endoplasmic reticulum are performed by host signal peptidase, whereas cleavages in the cytoplasmic side are performed by serine protease NS3. Signal cleavage at the 2K-4B site requires a prior NS3 protease-mediated cleavage at the 4A-2K site.</text>
</comment>
<comment type="PTM">
    <molecule>Protein prM</molecule>
    <text evidence="5">Cleaved in post-Golgi vesicles by a host furin, releasing the mature small envelope protein M, and peptide pr. This cleavage is incomplete as up to 30% of viral particles still carry uncleaved prM.</text>
</comment>
<comment type="PTM">
    <molecule>Envelope protein E</molecule>
    <text evidence="5">N-glycosylated.</text>
</comment>
<comment type="PTM">
    <molecule>Non-structural protein 1</molecule>
    <text evidence="5">N-glycosylated. The excreted form is glycosylated and this is required for efficient secretion of the protein from infected cells.</text>
</comment>
<comment type="PTM">
    <molecule>Serine protease NS3</molecule>
    <text evidence="8">Acetylated by host KAT5. Acetylation modulates NS3 RNA-binding and unwinding activities and plays an important positive role for viral replication.</text>
</comment>
<comment type="PTM">
    <molecule>RNA-directed RNA polymerase NS5</molecule>
    <text evidence="6">Sumoylation of RNA-directed RNA polymerase NS5 increases NS5 protein stability allowing proper viral RNA replication.</text>
</comment>
<comment type="PTM">
    <molecule>RNA-directed RNA polymerase NS5</molecule>
    <text evidence="5">Phosphorylated on serines residues. This phosphorylation may trigger NS5 nuclear localization.</text>
</comment>
<comment type="similarity">
    <text evidence="18">In the N-terminal section; belongs to the class I-like SAM-binding methyltransferase superfamily. mRNA cap 0-1 NS5-type methyltransferase family.</text>
</comment>
<keyword id="KW-0002">3D-structure</keyword>
<keyword id="KW-0007">Acetylation</keyword>
<keyword id="KW-1072">Activation of host autophagy by virus</keyword>
<keyword id="KW-0067">ATP-binding</keyword>
<keyword id="KW-0167">Capsid protein</keyword>
<keyword id="KW-1165">Clathrin-mediated endocytosis of virus by host</keyword>
<keyword id="KW-0165">Cleavage on pair of basic residues</keyword>
<keyword id="KW-1015">Disulfide bond</keyword>
<keyword id="KW-1170">Fusion of virus membrane with host endosomal membrane</keyword>
<keyword id="KW-1168">Fusion of virus membrane with host membrane</keyword>
<keyword id="KW-0325">Glycoprotein</keyword>
<keyword id="KW-0347">Helicase</keyword>
<keyword id="KW-1035">Host cytoplasm</keyword>
<keyword id="KW-1038">Host endoplasmic reticulum</keyword>
<keyword id="KW-1043">Host membrane</keyword>
<keyword id="KW-1045">Host mitochondrion</keyword>
<keyword id="KW-1048">Host nucleus</keyword>
<keyword id="KW-0945">Host-virus interaction</keyword>
<keyword id="KW-0378">Hydrolase</keyword>
<keyword id="KW-1090">Inhibition of host innate immune response by virus</keyword>
<keyword id="KW-1114">Inhibition of host interferon signaling pathway by virus</keyword>
<keyword id="KW-1097">Inhibition of host MAVS by virus</keyword>
<keyword id="KW-1113">Inhibition of host RLR pathway by virus</keyword>
<keyword id="KW-1106">Inhibition of host STAT2 by virus</keyword>
<keyword id="KW-1112">Inhibition of host TYK2 by virus</keyword>
<keyword id="KW-0922">Interferon antiviral system evasion</keyword>
<keyword id="KW-0407">Ion channel</keyword>
<keyword id="KW-0406">Ion transport</keyword>
<keyword id="KW-0472">Membrane</keyword>
<keyword id="KW-0479">Metal-binding</keyword>
<keyword id="KW-0489">Methyltransferase</keyword>
<keyword id="KW-0506">mRNA capping</keyword>
<keyword id="KW-0507">mRNA processing</keyword>
<keyword id="KW-0511">Multifunctional enzyme</keyword>
<keyword id="KW-0547">Nucleotide-binding</keyword>
<keyword id="KW-0548">Nucleotidyltransferase</keyword>
<keyword id="KW-0597">Phosphoprotein</keyword>
<keyword id="KW-0645">Protease</keyword>
<keyword id="KW-0694">RNA-binding</keyword>
<keyword id="KW-0696">RNA-directed RNA polymerase</keyword>
<keyword id="KW-0949">S-adenosyl-L-methionine</keyword>
<keyword id="KW-0964">Secreted</keyword>
<keyword id="KW-0720">Serine protease</keyword>
<keyword id="KW-0941">Suppressor of RNA silencing</keyword>
<keyword id="KW-0804">Transcription</keyword>
<keyword id="KW-0805">Transcription regulation</keyword>
<keyword id="KW-0808">Transferase</keyword>
<keyword id="KW-0812">Transmembrane</keyword>
<keyword id="KW-1133">Transmembrane helix</keyword>
<keyword id="KW-0813">Transport</keyword>
<keyword id="KW-0832">Ubl conjugation</keyword>
<keyword id="KW-1161">Viral attachment to host cell</keyword>
<keyword id="KW-0261">Viral envelope protein</keyword>
<keyword id="KW-0899">Viral immunoevasion</keyword>
<keyword id="KW-1182">Viral ion channel</keyword>
<keyword id="KW-1162">Viral penetration into host cytoplasm</keyword>
<keyword id="KW-0693">Viral RNA replication</keyword>
<keyword id="KW-0946">Virion</keyword>
<keyword id="KW-1164">Virus endocytosis by host</keyword>
<keyword id="KW-1160">Virus entry into host cell</keyword>
<keyword id="KW-0862">Zinc</keyword>
<proteinExistence type="evidence at protein level"/>
<evidence type="ECO:0000250" key="1">
    <source>
        <dbReference type="UniProtKB" id="P03314"/>
    </source>
</evidence>
<evidence type="ECO:0000250" key="2">
    <source>
        <dbReference type="UniProtKB" id="P14335"/>
    </source>
</evidence>
<evidence type="ECO:0000250" key="3">
    <source>
        <dbReference type="UniProtKB" id="P14336"/>
    </source>
</evidence>
<evidence type="ECO:0000250" key="4">
    <source>
        <dbReference type="UniProtKB" id="P14340"/>
    </source>
</evidence>
<evidence type="ECO:0000250" key="5">
    <source>
        <dbReference type="UniProtKB" id="P17763"/>
    </source>
</evidence>
<evidence type="ECO:0000250" key="6">
    <source>
        <dbReference type="UniProtKB" id="P29990"/>
    </source>
</evidence>
<evidence type="ECO:0000250" key="7">
    <source>
        <dbReference type="UniProtKB" id="P29991"/>
    </source>
</evidence>
<evidence type="ECO:0000250" key="8">
    <source>
        <dbReference type="UniProtKB" id="Q32ZE1"/>
    </source>
</evidence>
<evidence type="ECO:0000250" key="9">
    <source>
        <dbReference type="UniProtKB" id="Q6YMS4"/>
    </source>
</evidence>
<evidence type="ECO:0000250" key="10">
    <source>
        <dbReference type="UniProtKB" id="Q9Q6P4"/>
    </source>
</evidence>
<evidence type="ECO:0000255" key="11"/>
<evidence type="ECO:0000255" key="12">
    <source>
        <dbReference type="PROSITE-ProRule" id="PRU00498"/>
    </source>
</evidence>
<evidence type="ECO:0000255" key="13">
    <source>
        <dbReference type="PROSITE-ProRule" id="PRU00539"/>
    </source>
</evidence>
<evidence type="ECO:0000255" key="14">
    <source>
        <dbReference type="PROSITE-ProRule" id="PRU00541"/>
    </source>
</evidence>
<evidence type="ECO:0000255" key="15">
    <source>
        <dbReference type="PROSITE-ProRule" id="PRU00542"/>
    </source>
</evidence>
<evidence type="ECO:0000255" key="16">
    <source>
        <dbReference type="PROSITE-ProRule" id="PRU00859"/>
    </source>
</evidence>
<evidence type="ECO:0000255" key="17">
    <source>
        <dbReference type="PROSITE-ProRule" id="PRU00860"/>
    </source>
</evidence>
<evidence type="ECO:0000255" key="18">
    <source>
        <dbReference type="PROSITE-ProRule" id="PRU00924"/>
    </source>
</evidence>
<evidence type="ECO:0000305" key="19"/>
<evidence type="ECO:0007829" key="20">
    <source>
        <dbReference type="PDB" id="3UZV"/>
    </source>
</evidence>
<evidence type="ECO:0007829" key="21">
    <source>
        <dbReference type="PDB" id="6VG5"/>
    </source>
</evidence>
<dbReference type="EC" id="3.4.21.91"/>
<dbReference type="EC" id="3.6.1.15" evidence="10"/>
<dbReference type="EC" id="3.6.4.13" evidence="10"/>
<dbReference type="EC" id="2.1.1.56" evidence="18"/>
<dbReference type="EC" id="2.1.1.57" evidence="18"/>
<dbReference type="EC" id="2.7.7.48" evidence="13"/>
<dbReference type="EMBL" id="M20558">
    <property type="protein sequence ID" value="AAA42942.1"/>
    <property type="molecule type" value="Genomic_RNA"/>
</dbReference>
<dbReference type="EMBL" id="M15075">
    <property type="protein sequence ID" value="AAA42961.1"/>
    <property type="molecule type" value="Genomic_RNA"/>
</dbReference>
<dbReference type="EMBL" id="M14969">
    <property type="protein sequence ID" value="AAA66406.1"/>
    <property type="molecule type" value="Genomic_RNA"/>
</dbReference>
<dbReference type="EMBL" id="M14970">
    <property type="status" value="NOT_ANNOTATED_CDS"/>
    <property type="molecule type" value="Genomic_RNA"/>
</dbReference>
<dbReference type="PIR" id="A25817">
    <property type="entry name" value="A25817"/>
</dbReference>
<dbReference type="PIR" id="A94346">
    <property type="entry name" value="GNWVJA"/>
</dbReference>
<dbReference type="PDB" id="3UZV">
    <property type="method" value="X-ray"/>
    <property type="resolution" value="2.10 A"/>
    <property type="chains" value="A=576-680"/>
</dbReference>
<dbReference type="PDB" id="6VG5">
    <property type="method" value="X-ray"/>
    <property type="resolution" value="1.50 A"/>
    <property type="chains" value="A/B=21-100"/>
</dbReference>
<dbReference type="PDB" id="6VSO">
    <property type="method" value="X-ray"/>
    <property type="resolution" value="3.00 A"/>
    <property type="chains" value="A/B/C/D/E/F=21-100"/>
</dbReference>
<dbReference type="PDBsum" id="3UZV"/>
<dbReference type="PDBsum" id="6VG5"/>
<dbReference type="PDBsum" id="6VSO"/>
<dbReference type="BMRB" id="P07564"/>
<dbReference type="SMR" id="P07564"/>
<dbReference type="MEROPS" id="S07.001"/>
<dbReference type="ABCD" id="P07564">
    <property type="antibodies" value="4 sequenced antibodies"/>
</dbReference>
<dbReference type="BRENDA" id="2.7.11.1">
    <property type="organism ID" value="3474"/>
</dbReference>
<dbReference type="EvolutionaryTrace" id="P07564"/>
<dbReference type="PRO" id="PR:P07564"/>
<dbReference type="Proteomes" id="UP000002475">
    <property type="component" value="Genome"/>
</dbReference>
<dbReference type="GO" id="GO:0005576">
    <property type="term" value="C:extracellular region"/>
    <property type="evidence" value="ECO:0007669"/>
    <property type="project" value="UniProtKB-SubCell"/>
</dbReference>
<dbReference type="GO" id="GO:0044167">
    <property type="term" value="C:host cell endoplasmic reticulum membrane"/>
    <property type="evidence" value="ECO:0007669"/>
    <property type="project" value="UniProtKB-SubCell"/>
</dbReference>
<dbReference type="GO" id="GO:0033650">
    <property type="term" value="C:host cell mitochondrion"/>
    <property type="evidence" value="ECO:0007669"/>
    <property type="project" value="UniProtKB-SubCell"/>
</dbReference>
<dbReference type="GO" id="GO:0042025">
    <property type="term" value="C:host cell nucleus"/>
    <property type="evidence" value="ECO:0007669"/>
    <property type="project" value="UniProtKB-SubCell"/>
</dbReference>
<dbReference type="GO" id="GO:0044220">
    <property type="term" value="C:host cell perinuclear region of cytoplasm"/>
    <property type="evidence" value="ECO:0007669"/>
    <property type="project" value="UniProtKB-SubCell"/>
</dbReference>
<dbReference type="GO" id="GO:0016020">
    <property type="term" value="C:membrane"/>
    <property type="evidence" value="ECO:0007669"/>
    <property type="project" value="UniProtKB-KW"/>
</dbReference>
<dbReference type="GO" id="GO:0019028">
    <property type="term" value="C:viral capsid"/>
    <property type="evidence" value="ECO:0007669"/>
    <property type="project" value="UniProtKB-KW"/>
</dbReference>
<dbReference type="GO" id="GO:0019031">
    <property type="term" value="C:viral envelope"/>
    <property type="evidence" value="ECO:0007669"/>
    <property type="project" value="UniProtKB-KW"/>
</dbReference>
<dbReference type="GO" id="GO:0055036">
    <property type="term" value="C:virion membrane"/>
    <property type="evidence" value="ECO:0007669"/>
    <property type="project" value="UniProtKB-SubCell"/>
</dbReference>
<dbReference type="GO" id="GO:0005524">
    <property type="term" value="F:ATP binding"/>
    <property type="evidence" value="ECO:0007669"/>
    <property type="project" value="UniProtKB-KW"/>
</dbReference>
<dbReference type="GO" id="GO:0016887">
    <property type="term" value="F:ATP hydrolysis activity"/>
    <property type="evidence" value="ECO:0007669"/>
    <property type="project" value="RHEA"/>
</dbReference>
<dbReference type="GO" id="GO:0015267">
    <property type="term" value="F:channel activity"/>
    <property type="evidence" value="ECO:0007669"/>
    <property type="project" value="UniProtKB-KW"/>
</dbReference>
<dbReference type="GO" id="GO:0003725">
    <property type="term" value="F:double-stranded RNA binding"/>
    <property type="evidence" value="ECO:0007669"/>
    <property type="project" value="InterPro"/>
</dbReference>
<dbReference type="GO" id="GO:0046872">
    <property type="term" value="F:metal ion binding"/>
    <property type="evidence" value="ECO:0007669"/>
    <property type="project" value="UniProtKB-KW"/>
</dbReference>
<dbReference type="GO" id="GO:0004483">
    <property type="term" value="F:mRNA (nucleoside-2'-O-)-methyltransferase activity"/>
    <property type="evidence" value="ECO:0007669"/>
    <property type="project" value="UniProtKB-EC"/>
</dbReference>
<dbReference type="GO" id="GO:0004482">
    <property type="term" value="F:mRNA 5'-cap (guanine-N7-)-methyltransferase activity"/>
    <property type="evidence" value="ECO:0007669"/>
    <property type="project" value="UniProtKB-EC"/>
</dbReference>
<dbReference type="GO" id="GO:0046983">
    <property type="term" value="F:protein dimerization activity"/>
    <property type="evidence" value="ECO:0007669"/>
    <property type="project" value="InterPro"/>
</dbReference>
<dbReference type="GO" id="GO:0003724">
    <property type="term" value="F:RNA helicase activity"/>
    <property type="evidence" value="ECO:0007669"/>
    <property type="project" value="UniProtKB-EC"/>
</dbReference>
<dbReference type="GO" id="GO:0003968">
    <property type="term" value="F:RNA-directed RNA polymerase activity"/>
    <property type="evidence" value="ECO:0007669"/>
    <property type="project" value="UniProtKB-KW"/>
</dbReference>
<dbReference type="GO" id="GO:0004252">
    <property type="term" value="F:serine-type endopeptidase activity"/>
    <property type="evidence" value="ECO:0007669"/>
    <property type="project" value="InterPro"/>
</dbReference>
<dbReference type="GO" id="GO:0005198">
    <property type="term" value="F:structural molecule activity"/>
    <property type="evidence" value="ECO:0007669"/>
    <property type="project" value="InterPro"/>
</dbReference>
<dbReference type="GO" id="GO:0075512">
    <property type="term" value="P:clathrin-dependent endocytosis of virus by host cell"/>
    <property type="evidence" value="ECO:0007669"/>
    <property type="project" value="UniProtKB-KW"/>
</dbReference>
<dbReference type="GO" id="GO:0039654">
    <property type="term" value="P:fusion of virus membrane with host endosome membrane"/>
    <property type="evidence" value="ECO:0007669"/>
    <property type="project" value="UniProtKB-KW"/>
</dbReference>
<dbReference type="GO" id="GO:0034220">
    <property type="term" value="P:monoatomic ion transmembrane transport"/>
    <property type="evidence" value="ECO:0007669"/>
    <property type="project" value="UniProtKB-KW"/>
</dbReference>
<dbReference type="GO" id="GO:0006508">
    <property type="term" value="P:proteolysis"/>
    <property type="evidence" value="ECO:0007669"/>
    <property type="project" value="UniProtKB-KW"/>
</dbReference>
<dbReference type="GO" id="GO:0039520">
    <property type="term" value="P:symbiont-mediated activation of host autophagy"/>
    <property type="evidence" value="ECO:0007669"/>
    <property type="project" value="UniProtKB-KW"/>
</dbReference>
<dbReference type="GO" id="GO:0039545">
    <property type="term" value="P:symbiont-mediated suppression of host cytoplasmic pattern recognition receptor signaling pathway via inhibition of MAVS activity"/>
    <property type="evidence" value="ECO:0007669"/>
    <property type="project" value="UniProtKB-KW"/>
</dbReference>
<dbReference type="GO" id="GO:0039574">
    <property type="term" value="P:symbiont-mediated suppression of host JAK-STAT cascade via inhibition of host TYK2 activity"/>
    <property type="evidence" value="ECO:0007669"/>
    <property type="project" value="UniProtKB-KW"/>
</dbReference>
<dbReference type="GO" id="GO:0039564">
    <property type="term" value="P:symbiont-mediated suppression of host JAK-STAT cascade via inhibition of STAT2 activity"/>
    <property type="evidence" value="ECO:0007669"/>
    <property type="project" value="UniProtKB-KW"/>
</dbReference>
<dbReference type="GO" id="GO:0039502">
    <property type="term" value="P:symbiont-mediated suppression of host type I interferon-mediated signaling pathway"/>
    <property type="evidence" value="ECO:0007669"/>
    <property type="project" value="UniProtKB-KW"/>
</dbReference>
<dbReference type="GO" id="GO:0039694">
    <property type="term" value="P:viral RNA genome replication"/>
    <property type="evidence" value="ECO:0007669"/>
    <property type="project" value="InterPro"/>
</dbReference>
<dbReference type="GO" id="GO:0019062">
    <property type="term" value="P:virion attachment to host cell"/>
    <property type="evidence" value="ECO:0007669"/>
    <property type="project" value="UniProtKB-KW"/>
</dbReference>
<dbReference type="CDD" id="cd20761">
    <property type="entry name" value="capping_2-OMTase_Flaviviridae"/>
    <property type="match status" value="1"/>
</dbReference>
<dbReference type="CDD" id="cd17931">
    <property type="entry name" value="DEXHc_viral_Ns3"/>
    <property type="match status" value="1"/>
</dbReference>
<dbReference type="CDD" id="cd12149">
    <property type="entry name" value="Flavi_E_C"/>
    <property type="match status" value="1"/>
</dbReference>
<dbReference type="CDD" id="cd17038">
    <property type="entry name" value="Flavi_M"/>
    <property type="match status" value="1"/>
</dbReference>
<dbReference type="CDD" id="cd23204">
    <property type="entry name" value="Flavivirus_RdRp"/>
    <property type="match status" value="1"/>
</dbReference>
<dbReference type="CDD" id="cd18806">
    <property type="entry name" value="SF2_C_viral"/>
    <property type="match status" value="1"/>
</dbReference>
<dbReference type="FunFam" id="1.20.1280.260:FF:000001">
    <property type="entry name" value="Envelope glycoprotein"/>
    <property type="match status" value="1"/>
</dbReference>
<dbReference type="FunFam" id="2.60.40.350:FF:000001">
    <property type="entry name" value="Envelope glycoprotein"/>
    <property type="match status" value="1"/>
</dbReference>
<dbReference type="FunFam" id="1.10.10.930:FF:000001">
    <property type="entry name" value="Genome polyprotein"/>
    <property type="match status" value="1"/>
</dbReference>
<dbReference type="FunFam" id="1.10.260.90:FF:000001">
    <property type="entry name" value="Genome polyprotein"/>
    <property type="match status" value="1"/>
</dbReference>
<dbReference type="FunFam" id="2.60.260.50:FF:000001">
    <property type="entry name" value="Genome polyprotein"/>
    <property type="match status" value="1"/>
</dbReference>
<dbReference type="FunFam" id="3.30.70.2840:FF:000001">
    <property type="entry name" value="Genome polyprotein"/>
    <property type="match status" value="1"/>
</dbReference>
<dbReference type="FunFam" id="3.30.70.2840:FF:000002">
    <property type="entry name" value="Genome polyprotein"/>
    <property type="match status" value="1"/>
</dbReference>
<dbReference type="FunFam" id="3.40.50.150:FF:000105">
    <property type="entry name" value="Genome polyprotein"/>
    <property type="match status" value="1"/>
</dbReference>
<dbReference type="FunFam" id="3.40.50.300:FF:000763">
    <property type="entry name" value="Genome polyprotein"/>
    <property type="match status" value="1"/>
</dbReference>
<dbReference type="Gene3D" id="1.10.10.930">
    <property type="match status" value="1"/>
</dbReference>
<dbReference type="Gene3D" id="1.10.260.90">
    <property type="match status" value="1"/>
</dbReference>
<dbReference type="Gene3D" id="1.20.1280.260">
    <property type="match status" value="1"/>
</dbReference>
<dbReference type="Gene3D" id="2.40.10.120">
    <property type="match status" value="2"/>
</dbReference>
<dbReference type="Gene3D" id="2.60.40.350">
    <property type="match status" value="1"/>
</dbReference>
<dbReference type="Gene3D" id="1.10.8.970">
    <property type="entry name" value="Flavivirus envelope glycoprotein M-like"/>
    <property type="match status" value="1"/>
</dbReference>
<dbReference type="Gene3D" id="2.60.260.50">
    <property type="entry name" value="Flavivirus polyprotein propeptide domain"/>
    <property type="match status" value="1"/>
</dbReference>
<dbReference type="Gene3D" id="3.30.70.2840">
    <property type="entry name" value="Flavivirus RNA-directed RNA polymerase, thumb domain"/>
    <property type="match status" value="3"/>
</dbReference>
<dbReference type="Gene3D" id="3.40.50.300">
    <property type="entry name" value="P-loop containing nucleotide triphosphate hydrolases"/>
    <property type="match status" value="2"/>
</dbReference>
<dbReference type="Gene3D" id="2.60.98.10">
    <property type="entry name" value="Tick-borne Encephalitis virus Glycoprotein, domain 1"/>
    <property type="match status" value="1"/>
</dbReference>
<dbReference type="Gene3D" id="2.40.10.10">
    <property type="entry name" value="Trypsin-like serine proteases"/>
    <property type="match status" value="1"/>
</dbReference>
<dbReference type="Gene3D" id="3.40.50.150">
    <property type="entry name" value="Vaccinia Virus protein VP39"/>
    <property type="match status" value="1"/>
</dbReference>
<dbReference type="Gene3D" id="3.30.67.10">
    <property type="entry name" value="Viral Envelope Glycoprotein, domain 2"/>
    <property type="match status" value="1"/>
</dbReference>
<dbReference type="Gene3D" id="3.30.387.10">
    <property type="entry name" value="Viral Envelope Glycoprotein, domain 3"/>
    <property type="match status" value="1"/>
</dbReference>
<dbReference type="InterPro" id="IPR043502">
    <property type="entry name" value="DNA/RNA_pol_sf"/>
</dbReference>
<dbReference type="InterPro" id="IPR000069">
    <property type="entry name" value="Env_glycoprot_M_flavivir"/>
</dbReference>
<dbReference type="InterPro" id="IPR038302">
    <property type="entry name" value="Env_glycoprot_M_sf_flavivir"/>
</dbReference>
<dbReference type="InterPro" id="IPR013755">
    <property type="entry name" value="Flav_gly_cen_dom_subdom1"/>
</dbReference>
<dbReference type="InterPro" id="IPR001122">
    <property type="entry name" value="Flavi_capsidC"/>
</dbReference>
<dbReference type="InterPro" id="IPR037172">
    <property type="entry name" value="Flavi_capsidC_sf"/>
</dbReference>
<dbReference type="InterPro" id="IPR011492">
    <property type="entry name" value="Flavi_DEAD"/>
</dbReference>
<dbReference type="InterPro" id="IPR027287">
    <property type="entry name" value="Flavi_E_Ig-like"/>
</dbReference>
<dbReference type="InterPro" id="IPR026470">
    <property type="entry name" value="Flavi_E_Stem/Anchor_dom"/>
</dbReference>
<dbReference type="InterPro" id="IPR038345">
    <property type="entry name" value="Flavi_E_Stem/Anchor_dom_sf"/>
</dbReference>
<dbReference type="InterPro" id="IPR011998">
    <property type="entry name" value="Flavi_Glycoprot_E_cen/dimer"/>
</dbReference>
<dbReference type="InterPro" id="IPR001157">
    <property type="entry name" value="Flavi_NS1"/>
</dbReference>
<dbReference type="InterPro" id="IPR000752">
    <property type="entry name" value="Flavi_NS2A"/>
</dbReference>
<dbReference type="InterPro" id="IPR000487">
    <property type="entry name" value="Flavi_NS2B"/>
</dbReference>
<dbReference type="InterPro" id="IPR001850">
    <property type="entry name" value="Flavi_NS3_S7"/>
</dbReference>
<dbReference type="InterPro" id="IPR000404">
    <property type="entry name" value="Flavi_NS4A"/>
</dbReference>
<dbReference type="InterPro" id="IPR001528">
    <property type="entry name" value="Flavi_NS4B"/>
</dbReference>
<dbReference type="InterPro" id="IPR046811">
    <property type="entry name" value="Flavi_NS5_thumb"/>
</dbReference>
<dbReference type="InterPro" id="IPR002535">
    <property type="entry name" value="Flavi_propep"/>
</dbReference>
<dbReference type="InterPro" id="IPR038688">
    <property type="entry name" value="Flavi_propep_sf"/>
</dbReference>
<dbReference type="InterPro" id="IPR047530">
    <property type="entry name" value="Flavi_RdRp"/>
</dbReference>
<dbReference type="InterPro" id="IPR000208">
    <property type="entry name" value="Flavi_RdRp_fingers/palm"/>
</dbReference>
<dbReference type="InterPro" id="IPR000336">
    <property type="entry name" value="Flavivir/Alphavir_Ig-like_sf"/>
</dbReference>
<dbReference type="InterPro" id="IPR014412">
    <property type="entry name" value="Gen_Poly_FLV"/>
</dbReference>
<dbReference type="InterPro" id="IPR036253">
    <property type="entry name" value="Glycoprot_cen/dimer_sf"/>
</dbReference>
<dbReference type="InterPro" id="IPR038055">
    <property type="entry name" value="Glycoprot_E_dimer_dom"/>
</dbReference>
<dbReference type="InterPro" id="IPR013756">
    <property type="entry name" value="GlyE_cen_dom_subdom2"/>
</dbReference>
<dbReference type="InterPro" id="IPR014001">
    <property type="entry name" value="Helicase_ATP-bd"/>
</dbReference>
<dbReference type="InterPro" id="IPR001650">
    <property type="entry name" value="Helicase_C-like"/>
</dbReference>
<dbReference type="InterPro" id="IPR014756">
    <property type="entry name" value="Ig_E-set"/>
</dbReference>
<dbReference type="InterPro" id="IPR026490">
    <property type="entry name" value="mRNA_cap_0/1_MeTrfase"/>
</dbReference>
<dbReference type="InterPro" id="IPR049486">
    <property type="entry name" value="NS3-hel_C_flaviviridae"/>
</dbReference>
<dbReference type="InterPro" id="IPR027417">
    <property type="entry name" value="P-loop_NTPase"/>
</dbReference>
<dbReference type="InterPro" id="IPR009003">
    <property type="entry name" value="Peptidase_S1_PA"/>
</dbReference>
<dbReference type="InterPro" id="IPR043504">
    <property type="entry name" value="Peptidase_S1_PA_chymotrypsin"/>
</dbReference>
<dbReference type="InterPro" id="IPR007094">
    <property type="entry name" value="RNA-dir_pol_PSvirus"/>
</dbReference>
<dbReference type="InterPro" id="IPR002877">
    <property type="entry name" value="RNA_MeTrfase_FtsJ_dom"/>
</dbReference>
<dbReference type="InterPro" id="IPR029063">
    <property type="entry name" value="SAM-dependent_MTases_sf"/>
</dbReference>
<dbReference type="NCBIfam" id="TIGR04240">
    <property type="entry name" value="flavi_E_stem"/>
    <property type="match status" value="1"/>
</dbReference>
<dbReference type="Pfam" id="PF20907">
    <property type="entry name" value="Flav_NS3-hel_C"/>
    <property type="match status" value="1"/>
</dbReference>
<dbReference type="Pfam" id="PF01003">
    <property type="entry name" value="Flavi_capsid"/>
    <property type="match status" value="1"/>
</dbReference>
<dbReference type="Pfam" id="PF07652">
    <property type="entry name" value="Flavi_DEAD"/>
    <property type="match status" value="1"/>
</dbReference>
<dbReference type="Pfam" id="PF21659">
    <property type="entry name" value="Flavi_E_stem"/>
    <property type="match status" value="1"/>
</dbReference>
<dbReference type="Pfam" id="PF02832">
    <property type="entry name" value="Flavi_glycop_C"/>
    <property type="match status" value="1"/>
</dbReference>
<dbReference type="Pfam" id="PF00869">
    <property type="entry name" value="Flavi_glycoprot"/>
    <property type="match status" value="1"/>
</dbReference>
<dbReference type="Pfam" id="PF01004">
    <property type="entry name" value="Flavi_M"/>
    <property type="match status" value="1"/>
</dbReference>
<dbReference type="Pfam" id="PF00948">
    <property type="entry name" value="Flavi_NS1"/>
    <property type="match status" value="1"/>
</dbReference>
<dbReference type="Pfam" id="PF01005">
    <property type="entry name" value="Flavi_NS2A"/>
    <property type="match status" value="1"/>
</dbReference>
<dbReference type="Pfam" id="PF01002">
    <property type="entry name" value="Flavi_NS2B"/>
    <property type="match status" value="1"/>
</dbReference>
<dbReference type="Pfam" id="PF01350">
    <property type="entry name" value="Flavi_NS4A"/>
    <property type="match status" value="1"/>
</dbReference>
<dbReference type="Pfam" id="PF01349">
    <property type="entry name" value="Flavi_NS4B"/>
    <property type="match status" value="1"/>
</dbReference>
<dbReference type="Pfam" id="PF00972">
    <property type="entry name" value="Flavi_NS5"/>
    <property type="match status" value="1"/>
</dbReference>
<dbReference type="Pfam" id="PF20483">
    <property type="entry name" value="Flavi_NS5_thumb"/>
    <property type="match status" value="1"/>
</dbReference>
<dbReference type="Pfam" id="PF01570">
    <property type="entry name" value="Flavi_propep"/>
    <property type="match status" value="1"/>
</dbReference>
<dbReference type="Pfam" id="PF01728">
    <property type="entry name" value="FtsJ"/>
    <property type="match status" value="1"/>
</dbReference>
<dbReference type="Pfam" id="PF00949">
    <property type="entry name" value="Peptidase_S7"/>
    <property type="match status" value="1"/>
</dbReference>
<dbReference type="PIRSF" id="PIRSF003817">
    <property type="entry name" value="Gen_Poly_FLV"/>
    <property type="match status" value="1"/>
</dbReference>
<dbReference type="SMART" id="SM00487">
    <property type="entry name" value="DEXDc"/>
    <property type="match status" value="1"/>
</dbReference>
<dbReference type="SMART" id="SM00490">
    <property type="entry name" value="HELICc"/>
    <property type="match status" value="1"/>
</dbReference>
<dbReference type="SUPFAM" id="SSF56672">
    <property type="entry name" value="DNA/RNA polymerases"/>
    <property type="match status" value="1"/>
</dbReference>
<dbReference type="SUPFAM" id="SSF81296">
    <property type="entry name" value="E set domains"/>
    <property type="match status" value="1"/>
</dbReference>
<dbReference type="SUPFAM" id="SSF101257">
    <property type="entry name" value="Flavivirus capsid protein C"/>
    <property type="match status" value="1"/>
</dbReference>
<dbReference type="SUPFAM" id="SSF52540">
    <property type="entry name" value="P-loop containing nucleoside triphosphate hydrolases"/>
    <property type="match status" value="2"/>
</dbReference>
<dbReference type="SUPFAM" id="SSF53335">
    <property type="entry name" value="S-adenosyl-L-methionine-dependent methyltransferases"/>
    <property type="match status" value="1"/>
</dbReference>
<dbReference type="SUPFAM" id="SSF50494">
    <property type="entry name" value="Trypsin-like serine proteases"/>
    <property type="match status" value="1"/>
</dbReference>
<dbReference type="SUPFAM" id="SSF56983">
    <property type="entry name" value="Viral glycoprotein, central and dimerisation domains"/>
    <property type="match status" value="1"/>
</dbReference>
<dbReference type="PROSITE" id="PS51527">
    <property type="entry name" value="FLAVIVIRUS_NS2B"/>
    <property type="match status" value="1"/>
</dbReference>
<dbReference type="PROSITE" id="PS51528">
    <property type="entry name" value="FLAVIVIRUS_NS3PRO"/>
    <property type="match status" value="1"/>
</dbReference>
<dbReference type="PROSITE" id="PS51192">
    <property type="entry name" value="HELICASE_ATP_BIND_1"/>
    <property type="match status" value="1"/>
</dbReference>
<dbReference type="PROSITE" id="PS51194">
    <property type="entry name" value="HELICASE_CTER"/>
    <property type="match status" value="1"/>
</dbReference>
<dbReference type="PROSITE" id="PS50507">
    <property type="entry name" value="RDRP_SSRNA_POS"/>
    <property type="match status" value="1"/>
</dbReference>
<dbReference type="PROSITE" id="PS51591">
    <property type="entry name" value="RNA_CAP01_NS5_MT"/>
    <property type="match status" value="1"/>
</dbReference>
<organism>
    <name type="scientific">Dengue virus type 2 (strain Jamaica/1409/1983)</name>
    <name type="common">DENV-2</name>
    <dbReference type="NCBI Taxonomy" id="11064"/>
    <lineage>
        <taxon>Viruses</taxon>
        <taxon>Riboviria</taxon>
        <taxon>Orthornavirae</taxon>
        <taxon>Kitrinoviricota</taxon>
        <taxon>Flasuviricetes</taxon>
        <taxon>Amarillovirales</taxon>
        <taxon>Flaviviridae</taxon>
        <taxon>Orthoflavivirus</taxon>
        <taxon>Orthoflavivirus denguei</taxon>
        <taxon>Dengue virus</taxon>
    </lineage>
</organism>
<organismHost>
    <name type="scientific">Aedimorphus</name>
    <dbReference type="NCBI Taxonomy" id="53540"/>
</organismHost>
<organismHost>
    <name type="scientific">Diceromyia</name>
    <dbReference type="NCBI Taxonomy" id="53539"/>
</organismHost>
<organismHost>
    <name type="scientific">Erythrocebus patas</name>
    <name type="common">Red guenon</name>
    <name type="synonym">Cercopithecus patas</name>
    <dbReference type="NCBI Taxonomy" id="9538"/>
</organismHost>
<organismHost>
    <name type="scientific">Homo sapiens</name>
    <name type="common">Human</name>
    <dbReference type="NCBI Taxonomy" id="9606"/>
</organismHost>
<organismHost>
    <name type="scientific">Stegomyia</name>
    <dbReference type="NCBI Taxonomy" id="53541"/>
</organismHost>
<accession>P07564</accession>
<accession>P07565</accession>
<accession>Q88642</accession>
<accession>Q88643</accession>
<accession>Q88644</accession>
<accession>Q88645</accession>
<reference key="1">
    <citation type="journal article" date="1988" name="Virology">
        <title>Nucleotide sequence and deduced amino acid sequence of the nonstructural proteins of dengue type 2 virus, Jamaica genotype: comparative analysis of the full-length genome.</title>
        <authorList>
            <person name="Deubel V."/>
            <person name="Kinney R.M."/>
            <person name="Trent D.W."/>
        </authorList>
    </citation>
    <scope>NUCLEOTIDE SEQUENCE [GENOMIC RNA]</scope>
</reference>
<reference key="2">
    <citation type="journal article" date="1986" name="Virology">
        <title>Nucleotide sequence and deduced amino acid sequence of the structural proteins of dengue type 2 virus, Jamaica genotype.</title>
        <authorList>
            <person name="Deubel V."/>
            <person name="Kinney R.M."/>
            <person name="Trent D.W."/>
        </authorList>
    </citation>
    <scope>NUCLEOTIDE SEQUENCE [GENOMIC RNA] OF 1-791</scope>
</reference>
<reference key="3">
    <citation type="journal article" date="1986" name="Gene">
        <title>Partial sequence analysis of cloned dengue virus type 2 genome.</title>
        <authorList>
            <person name="Yaegashi T."/>
            <person name="Vakharia V.N."/>
            <person name="Page K."/>
            <person name="Sasaguri Y."/>
            <person name="Feighny R."/>
            <person name="Padmanabhan R."/>
        </authorList>
    </citation>
    <scope>NUCLEOTIDE SEQUENCE [GENOMIC RNA] OF 1044-1928 AND 2119-2761</scope>
</reference>
<reference key="4">
    <citation type="journal article" date="1989" name="Virology">
        <title>Definition of the carboxy termini of the three glycoproteins specified by dengue virus type 2.</title>
        <authorList>
            <person name="Wright P.J."/>
            <person name="Cauchi M.R."/>
            <person name="Ng M.L."/>
        </authorList>
    </citation>
    <scope>C-TERMINUS (CAPSID PROTEIN C)</scope>
    <scope>C-TERMINUS (ENVELOPE PROTEIN E)</scope>
    <scope>C-TERMINUS (NON-STRUCTURAL PROTEIN 1)</scope>
    <source>
        <strain>New-Guinea</strain>
    </source>
</reference>
<reference key="5">
    <citation type="journal article" date="2012" name="Structure">
        <title>Mechanism of dengue virus broad cross-neutralization by a monoclonal antibody.</title>
        <authorList>
            <person name="Cockburn J.J."/>
            <person name="Navarro Sanchez M.E."/>
            <person name="Fretes N."/>
            <person name="Urvoas A."/>
            <person name="Staropoli I."/>
            <person name="Kikuti C.M."/>
            <person name="Coffey L.L."/>
            <person name="Arenzana Seisdedos F."/>
            <person name="Bedouelle H."/>
            <person name="Rey F.A."/>
        </authorList>
    </citation>
    <scope>X-RAY CRYSTALLOGRAPHY (2.1 ANGSTROMS) OF 576-680</scope>
</reference>
<protein>
    <recommendedName>
        <fullName>Genome polyprotein</fullName>
    </recommendedName>
    <component>
        <recommendedName>
            <fullName>Capsid protein C</fullName>
        </recommendedName>
        <alternativeName>
            <fullName>Core protein</fullName>
        </alternativeName>
    </component>
    <component>
        <recommendedName>
            <fullName>Protein prM</fullName>
        </recommendedName>
    </component>
    <component>
        <recommendedName>
            <fullName>Peptide pr</fullName>
        </recommendedName>
    </component>
    <component>
        <recommendedName>
            <fullName>Small envelope protein M</fullName>
        </recommendedName>
        <alternativeName>
            <fullName>Matrix protein</fullName>
        </alternativeName>
    </component>
    <component>
        <recommendedName>
            <fullName>Envelope protein E</fullName>
        </recommendedName>
    </component>
    <component>
        <recommendedName>
            <fullName>Non-structural protein 1</fullName>
            <shortName>NS1</shortName>
        </recommendedName>
    </component>
    <component>
        <recommendedName>
            <fullName>Non-structural protein 2A</fullName>
            <shortName>NS2A</shortName>
        </recommendedName>
    </component>
    <component>
        <recommendedName>
            <fullName>Serine protease subunit NS2B</fullName>
        </recommendedName>
        <alternativeName>
            <fullName>Flavivirin protease NS2B regulatory subunit</fullName>
        </alternativeName>
        <alternativeName>
            <fullName>Non-structural protein 2B</fullName>
        </alternativeName>
    </component>
    <component>
        <recommendedName>
            <fullName>Serine protease NS3</fullName>
            <ecNumber>3.4.21.91</ecNumber>
            <ecNumber evidence="10">3.6.1.15</ecNumber>
            <ecNumber evidence="10">3.6.4.13</ecNumber>
        </recommendedName>
        <alternativeName>
            <fullName>Flavivirin protease NS3 catalytic subunit</fullName>
        </alternativeName>
        <alternativeName>
            <fullName>Non-structural protein 3</fullName>
        </alternativeName>
    </component>
    <component>
        <recommendedName>
            <fullName>Non-structural protein 4A</fullName>
            <shortName>NS4A</shortName>
        </recommendedName>
    </component>
    <component>
        <recommendedName>
            <fullName>Peptide 2k</fullName>
        </recommendedName>
    </component>
    <component>
        <recommendedName>
            <fullName>Non-structural protein 4B</fullName>
            <shortName>NS4B</shortName>
        </recommendedName>
    </component>
    <component>
        <recommendedName>
            <fullName>RNA-directed RNA polymerase NS5</fullName>
            <ecNumber evidence="18">2.1.1.56</ecNumber>
            <ecNumber evidence="18">2.1.1.57</ecNumber>
            <ecNumber evidence="13">2.7.7.48</ecNumber>
        </recommendedName>
        <alternativeName>
            <fullName>Non-structural protein 5</fullName>
        </alternativeName>
    </component>
</protein>
<name>POLG_DEN2J</name>
<feature type="chain" id="PRO_0000405215" description="Genome polyprotein">
    <location>
        <begin position="1"/>
        <end position="3391"/>
    </location>
</feature>
<feature type="chain" id="PRO_0000037947" description="Capsid protein C" evidence="5">
    <location>
        <begin position="1"/>
        <end position="100"/>
    </location>
</feature>
<feature type="propeptide" id="PRO_0000037948" description="ER anchor for the capsid protein C, removed in mature form by serine protease NS3" evidence="6">
    <location>
        <begin position="101"/>
        <end position="114"/>
    </location>
</feature>
<feature type="chain" id="PRO_0000308282" description="Protein prM" evidence="6">
    <location>
        <begin position="115"/>
        <end position="280"/>
    </location>
</feature>
<feature type="chain" id="PRO_0000308283" description="Peptide pr" evidence="6">
    <location>
        <begin position="115"/>
        <end position="205"/>
    </location>
</feature>
<feature type="chain" id="PRO_0000037949" description="Small envelope protein M" evidence="6">
    <location>
        <begin position="206"/>
        <end position="280"/>
    </location>
</feature>
<feature type="chain" id="PRO_0000037950" description="Envelope protein E" evidence="6">
    <location>
        <begin position="281"/>
        <end position="775"/>
    </location>
</feature>
<feature type="chain" id="PRO_0000037951" description="Non-structural protein 1" evidence="6">
    <location>
        <begin position="776"/>
        <end position="1127"/>
    </location>
</feature>
<feature type="chain" id="PRO_0000037952" description="Non-structural protein 2A" evidence="6">
    <location>
        <begin position="1128"/>
        <end position="1345"/>
    </location>
</feature>
<feature type="chain" id="PRO_0000037953" description="Serine protease subunit NS2B" evidence="6">
    <location>
        <begin position="1346"/>
        <end position="1475"/>
    </location>
</feature>
<feature type="chain" id="PRO_0000037954" description="Serine protease NS3" evidence="6">
    <location>
        <begin position="1476"/>
        <end position="2093"/>
    </location>
</feature>
<feature type="chain" id="PRO_0000037955" description="Non-structural protein 4A" evidence="6">
    <location>
        <begin position="2094"/>
        <end position="2220"/>
    </location>
</feature>
<feature type="peptide" id="PRO_0000308285" description="Peptide 2k" evidence="6">
    <location>
        <begin position="2221"/>
        <end position="2243"/>
    </location>
</feature>
<feature type="chain" id="PRO_0000037956" description="Non-structural protein 4B" evidence="6">
    <location>
        <begin position="2244"/>
        <end position="2491"/>
    </location>
</feature>
<feature type="chain" id="PRO_0000037957" description="RNA-directed RNA polymerase NS5" evidence="6">
    <location>
        <begin position="2492"/>
        <end position="3391"/>
    </location>
</feature>
<feature type="topological domain" description="Cytoplasmic" evidence="11">
    <location>
        <begin position="1"/>
        <end position="101"/>
    </location>
</feature>
<feature type="transmembrane region" description="Helical" evidence="11">
    <location>
        <begin position="102"/>
        <end position="119"/>
    </location>
</feature>
<feature type="topological domain" description="Extracellular" evidence="11">
    <location>
        <begin position="120"/>
        <end position="241"/>
    </location>
</feature>
<feature type="transmembrane region" description="Helical" evidence="11">
    <location>
        <begin position="242"/>
        <end position="259"/>
    </location>
</feature>
<feature type="topological domain" description="Cytoplasmic" evidence="11">
    <location>
        <begin position="260"/>
        <end position="265"/>
    </location>
</feature>
<feature type="transmembrane region" description="Helical" evidence="11">
    <location>
        <begin position="266"/>
        <end position="280"/>
    </location>
</feature>
<feature type="topological domain" description="Extracellular" evidence="11">
    <location>
        <begin position="281"/>
        <end position="725"/>
    </location>
</feature>
<feature type="transmembrane region" description="Helical" evidence="11">
    <location>
        <begin position="726"/>
        <end position="746"/>
    </location>
</feature>
<feature type="topological domain" description="Cytoplasmic" evidence="11">
    <location>
        <begin position="747"/>
        <end position="752"/>
    </location>
</feature>
<feature type="transmembrane region" description="Helical" evidence="11">
    <location>
        <begin position="753"/>
        <end position="773"/>
    </location>
</feature>
<feature type="topological domain" description="Extracellular" evidence="11">
    <location>
        <begin position="774"/>
        <end position="1195"/>
    </location>
</feature>
<feature type="transmembrane region" description="Helical" evidence="11">
    <location>
        <begin position="1196"/>
        <end position="1220"/>
    </location>
</feature>
<feature type="topological domain" description="Cytoplasmic" evidence="11">
    <location>
        <begin position="1221"/>
        <end position="1226"/>
    </location>
</feature>
<feature type="transmembrane region" description="Helical" evidence="11">
    <location>
        <begin position="1227"/>
        <end position="1245"/>
    </location>
</feature>
<feature type="topological domain" description="Lumenal" evidence="11">
    <location>
        <begin position="1246"/>
        <end position="1269"/>
    </location>
</feature>
<feature type="transmembrane region" description="Helical" evidence="11">
    <location>
        <begin position="1270"/>
        <end position="1290"/>
    </location>
</feature>
<feature type="topological domain" description="Cytoplasmic" evidence="11">
    <location>
        <position position="1291"/>
    </location>
</feature>
<feature type="transmembrane region" description="Helical" evidence="11">
    <location>
        <begin position="1292"/>
        <end position="1310"/>
    </location>
</feature>
<feature type="topological domain" description="Lumenal" evidence="11">
    <location>
        <begin position="1311"/>
        <end position="1317"/>
    </location>
</feature>
<feature type="transmembrane region" description="Helical" evidence="11">
    <location>
        <begin position="1318"/>
        <end position="1338"/>
    </location>
</feature>
<feature type="topological domain" description="Cytoplasmic" evidence="11">
    <location>
        <begin position="1339"/>
        <end position="1346"/>
    </location>
</feature>
<feature type="transmembrane region" description="Helical" evidence="11">
    <location>
        <begin position="1347"/>
        <end position="1367"/>
    </location>
</feature>
<feature type="topological domain" description="Lumenal" evidence="11">
    <location>
        <begin position="1368"/>
        <end position="1370"/>
    </location>
</feature>
<feature type="transmembrane region" description="Helical" evidence="11">
    <location>
        <begin position="1371"/>
        <end position="1391"/>
    </location>
</feature>
<feature type="topological domain" description="Cytoplasmic" evidence="11">
    <location>
        <begin position="1392"/>
        <end position="1447"/>
    </location>
</feature>
<feature type="intramembrane region" description="Helical" evidence="11">
    <location>
        <begin position="1448"/>
        <end position="1468"/>
    </location>
</feature>
<feature type="topological domain" description="Cytoplasmic" evidence="11">
    <location>
        <begin position="1469"/>
        <end position="2147"/>
    </location>
</feature>
<feature type="transmembrane region" description="Helical" evidence="11">
    <location>
        <begin position="2148"/>
        <end position="2168"/>
    </location>
</feature>
<feature type="topological domain" description="Lumenal" evidence="11">
    <location>
        <begin position="2169"/>
        <end position="2170"/>
    </location>
</feature>
<feature type="intramembrane region" description="Helical" evidence="11">
    <location>
        <begin position="2171"/>
        <end position="2191"/>
    </location>
</feature>
<feature type="topological domain" description="Lumenal" evidence="11">
    <location>
        <position position="2192"/>
    </location>
</feature>
<feature type="transmembrane region" description="Helical" evidence="11">
    <location>
        <begin position="2193"/>
        <end position="2213"/>
    </location>
</feature>
<feature type="topological domain" description="Cytoplasmic" evidence="11">
    <location>
        <begin position="2214"/>
        <end position="2228"/>
    </location>
</feature>
<feature type="transmembrane region" description="Helical; Note=Signal for NS4B" evidence="11">
    <location>
        <begin position="2229"/>
        <end position="2249"/>
    </location>
</feature>
<feature type="topological domain" description="Lumenal" evidence="11">
    <location>
        <begin position="2250"/>
        <end position="2274"/>
    </location>
</feature>
<feature type="intramembrane region" description="Helical" evidence="11">
    <location>
        <begin position="2275"/>
        <end position="2295"/>
    </location>
</feature>
<feature type="topological domain" description="Lumenal" evidence="11">
    <location>
        <begin position="2296"/>
        <end position="2316"/>
    </location>
</feature>
<feature type="intramembrane region" description="Helical" evidence="11">
    <location>
        <begin position="2317"/>
        <end position="2337"/>
    </location>
</feature>
<feature type="topological domain" description="Lumenal" evidence="11">
    <location>
        <begin position="2338"/>
        <end position="2347"/>
    </location>
</feature>
<feature type="transmembrane region" description="Helical" evidence="11">
    <location>
        <begin position="2348"/>
        <end position="2368"/>
    </location>
</feature>
<feature type="topological domain" description="Cytoplasmic" evidence="11">
    <location>
        <begin position="2369"/>
        <end position="2413"/>
    </location>
</feature>
<feature type="transmembrane region" description="Helical" evidence="11">
    <location>
        <begin position="2414"/>
        <end position="2434"/>
    </location>
</feature>
<feature type="topological domain" description="Lumenal" evidence="11">
    <location>
        <begin position="2435"/>
        <end position="2459"/>
    </location>
</feature>
<feature type="transmembrane region" description="Helical" evidence="11">
    <location>
        <begin position="2460"/>
        <end position="2480"/>
    </location>
</feature>
<feature type="topological domain" description="Cytoplasmic" evidence="11">
    <location>
        <begin position="2481"/>
        <end position="3391"/>
    </location>
</feature>
<feature type="domain" description="Peptidase S7" evidence="17">
    <location>
        <begin position="1476"/>
        <end position="1653"/>
    </location>
</feature>
<feature type="domain" description="Helicase ATP-binding" evidence="14">
    <location>
        <begin position="1655"/>
        <end position="1811"/>
    </location>
</feature>
<feature type="domain" description="Helicase C-terminal" evidence="15">
    <location>
        <begin position="1821"/>
        <end position="1988"/>
    </location>
</feature>
<feature type="domain" description="mRNA cap 0-1 NS5-type MT" evidence="18">
    <location>
        <begin position="2493"/>
        <end position="2755"/>
    </location>
</feature>
<feature type="domain" description="RdRp catalytic" evidence="13">
    <location>
        <begin position="3020"/>
        <end position="3169"/>
    </location>
</feature>
<feature type="region of interest" description="Interaction with host EXOC1" evidence="5">
    <location>
        <begin position="1"/>
        <end position="15"/>
    </location>
</feature>
<feature type="region of interest" description="Hydrophobic; homodimerization of capsid protein C" evidence="6">
    <location>
        <begin position="37"/>
        <end position="72"/>
    </location>
</feature>
<feature type="region of interest" description="Fusion peptide" evidence="3">
    <location>
        <begin position="378"/>
        <end position="391"/>
    </location>
</feature>
<feature type="region of interest" description="Interacts with and activates NS3 protease" evidence="16">
    <location>
        <begin position="1398"/>
        <end position="1437"/>
    </location>
</feature>
<feature type="region of interest" description="Important for RNA-binding" evidence="4">
    <location>
        <begin position="1659"/>
        <end position="1662"/>
    </location>
</feature>
<feature type="short sequence motif" description="DEAH box" evidence="14">
    <location>
        <begin position="1759"/>
        <end position="1762"/>
    </location>
</feature>
<feature type="short sequence motif" description="SUMO-interacting motif" evidence="6">
    <location>
        <begin position="2568"/>
        <end position="2571"/>
    </location>
</feature>
<feature type="active site" description="Charge relay system; for serine protease NS3 activity" evidence="17">
    <location>
        <position position="1526"/>
    </location>
</feature>
<feature type="active site" description="Charge relay system; for serine protease NS3 activity" evidence="17">
    <location>
        <position position="1550"/>
    </location>
</feature>
<feature type="active site" description="Charge relay system; for serine protease NS3 activity" evidence="17">
    <location>
        <position position="1610"/>
    </location>
</feature>
<feature type="active site" description="For 2'-O-MTase activity" evidence="9">
    <location>
        <position position="2552"/>
    </location>
</feature>
<feature type="active site" description="For 2'-O-MTase activity" evidence="9">
    <location>
        <position position="2637"/>
    </location>
</feature>
<feature type="active site" description="For 2'-O-MTase activity" evidence="9">
    <location>
        <position position="2672"/>
    </location>
</feature>
<feature type="active site" description="For 2'-O-MTase activity" evidence="9">
    <location>
        <position position="2708"/>
    </location>
</feature>
<feature type="binding site" evidence="14">
    <location>
        <begin position="1668"/>
        <end position="1675"/>
    </location>
    <ligand>
        <name>ATP</name>
        <dbReference type="ChEBI" id="CHEBI:30616"/>
    </ligand>
</feature>
<feature type="binding site" evidence="18">
    <location>
        <position position="2547"/>
    </location>
    <ligand>
        <name>S-adenosyl-L-methionine</name>
        <dbReference type="ChEBI" id="CHEBI:59789"/>
    </ligand>
</feature>
<feature type="binding site" evidence="18">
    <location>
        <position position="2577"/>
    </location>
    <ligand>
        <name>S-adenosyl-L-methionine</name>
        <dbReference type="ChEBI" id="CHEBI:59789"/>
    </ligand>
</feature>
<feature type="binding site" evidence="18">
    <location>
        <position position="2578"/>
    </location>
    <ligand>
        <name>S-adenosyl-L-methionine</name>
        <dbReference type="ChEBI" id="CHEBI:59789"/>
    </ligand>
</feature>
<feature type="binding site" evidence="18">
    <location>
        <position position="2595"/>
    </location>
    <ligand>
        <name>S-adenosyl-L-methionine</name>
        <dbReference type="ChEBI" id="CHEBI:59789"/>
    </ligand>
</feature>
<feature type="binding site" evidence="18">
    <location>
        <position position="2596"/>
    </location>
    <ligand>
        <name>S-adenosyl-L-methionine</name>
        <dbReference type="ChEBI" id="CHEBI:59789"/>
    </ligand>
</feature>
<feature type="binding site" evidence="18">
    <location>
        <position position="2622"/>
    </location>
    <ligand>
        <name>S-adenosyl-L-methionine</name>
        <dbReference type="ChEBI" id="CHEBI:59789"/>
    </ligand>
</feature>
<feature type="binding site" evidence="18">
    <location>
        <position position="2623"/>
    </location>
    <ligand>
        <name>S-adenosyl-L-methionine</name>
        <dbReference type="ChEBI" id="CHEBI:59789"/>
    </ligand>
</feature>
<feature type="binding site" evidence="18">
    <location>
        <position position="2638"/>
    </location>
    <ligand>
        <name>S-adenosyl-L-methionine</name>
        <dbReference type="ChEBI" id="CHEBI:59789"/>
    </ligand>
</feature>
<feature type="binding site" evidence="18">
    <location>
        <position position="2710"/>
    </location>
    <ligand>
        <name>S-adenosyl-L-methionine</name>
        <dbReference type="ChEBI" id="CHEBI:59789"/>
    </ligand>
</feature>
<feature type="binding site" evidence="9">
    <location>
        <position position="2929"/>
    </location>
    <ligand>
        <name>Zn(2+)</name>
        <dbReference type="ChEBI" id="CHEBI:29105"/>
        <label>1</label>
    </ligand>
</feature>
<feature type="binding site" evidence="9">
    <location>
        <position position="2933"/>
    </location>
    <ligand>
        <name>Zn(2+)</name>
        <dbReference type="ChEBI" id="CHEBI:29105"/>
        <label>1</label>
    </ligand>
</feature>
<feature type="binding site" evidence="9">
    <location>
        <position position="2938"/>
    </location>
    <ligand>
        <name>Zn(2+)</name>
        <dbReference type="ChEBI" id="CHEBI:29105"/>
        <label>1</label>
    </ligand>
</feature>
<feature type="binding site" evidence="9">
    <location>
        <position position="2941"/>
    </location>
    <ligand>
        <name>Zn(2+)</name>
        <dbReference type="ChEBI" id="CHEBI:29105"/>
        <label>1</label>
    </ligand>
</feature>
<feature type="binding site" evidence="9">
    <location>
        <position position="3203"/>
    </location>
    <ligand>
        <name>Zn(2+)</name>
        <dbReference type="ChEBI" id="CHEBI:29105"/>
        <label>2</label>
    </ligand>
</feature>
<feature type="binding site" evidence="9">
    <location>
        <position position="3219"/>
    </location>
    <ligand>
        <name>Zn(2+)</name>
        <dbReference type="ChEBI" id="CHEBI:29105"/>
        <label>2</label>
    </ligand>
</feature>
<feature type="binding site" evidence="9">
    <location>
        <position position="3338"/>
    </location>
    <ligand>
        <name>Zn(2+)</name>
        <dbReference type="ChEBI" id="CHEBI:29105"/>
        <label>2</label>
    </ligand>
</feature>
<feature type="site" description="Cleavage; by viral protease NS3" evidence="6">
    <location>
        <begin position="100"/>
        <end position="101"/>
    </location>
</feature>
<feature type="site" description="Cleavage; by host signal peptidase" evidence="6">
    <location>
        <begin position="114"/>
        <end position="115"/>
    </location>
</feature>
<feature type="site" description="Cleavage; by host furin" evidence="6 11">
    <location>
        <begin position="205"/>
        <end position="206"/>
    </location>
</feature>
<feature type="site" description="Cleavage; by host signal peptidase" evidence="6">
    <location>
        <begin position="280"/>
        <end position="281"/>
    </location>
</feature>
<feature type="site" description="Cleavage; by host signal peptidase" evidence="6">
    <location>
        <begin position="775"/>
        <end position="776"/>
    </location>
</feature>
<feature type="site" description="Cleavage; by host" evidence="6">
    <location>
        <begin position="1127"/>
        <end position="1128"/>
    </location>
</feature>
<feature type="site" description="Cleavage; by viral protease NS3" evidence="6">
    <location>
        <begin position="1345"/>
        <end position="1346"/>
    </location>
</feature>
<feature type="site" description="Cleavage; by autolysis" evidence="6">
    <location>
        <begin position="1475"/>
        <end position="1476"/>
    </location>
</feature>
<feature type="site" description="Involved in NS3 ATPase and RTPase activities" evidence="2">
    <location>
        <position position="1932"/>
    </location>
</feature>
<feature type="site" description="Involved in NS3 ATPase and RTPase activities" evidence="2">
    <location>
        <position position="1935"/>
    </location>
</feature>
<feature type="site" description="Cleavage; by autolysis" evidence="6">
    <location>
        <begin position="2093"/>
        <end position="2094"/>
    </location>
</feature>
<feature type="site" description="Cleavage; by viral protease NS3" evidence="6">
    <location>
        <begin position="2220"/>
        <end position="2221"/>
    </location>
</feature>
<feature type="site" description="Cleavage; by host signal peptidase" evidence="6">
    <location>
        <begin position="2243"/>
        <end position="2244"/>
    </location>
</feature>
<feature type="site" description="Cleavage; by viral protease NS3" evidence="6">
    <location>
        <begin position="2491"/>
        <end position="2492"/>
    </location>
</feature>
<feature type="site" description="mRNA cap binding" evidence="18">
    <location>
        <position position="2505"/>
    </location>
</feature>
<feature type="site" description="mRNA cap binding" evidence="18">
    <location>
        <position position="2509"/>
    </location>
</feature>
<feature type="site" description="mRNA cap binding; via carbonyl oxygen" evidence="18">
    <location>
        <position position="2511"/>
    </location>
</feature>
<feature type="site" description="mRNA cap binding" evidence="18">
    <location>
        <position position="2516"/>
    </location>
</feature>
<feature type="site" description="mRNA cap binding" evidence="18">
    <location>
        <position position="2520"/>
    </location>
</feature>
<feature type="site" description="Essential for 2'-O-methyltransferase activity" evidence="18">
    <location>
        <position position="2552"/>
    </location>
</feature>
<feature type="site" description="Essential for 2'-O-methyltransferase and N-7 methyltransferase activity" evidence="18">
    <location>
        <position position="2637"/>
    </location>
</feature>
<feature type="site" description="mRNA cap binding" evidence="18">
    <location>
        <position position="2641"/>
    </location>
</feature>
<feature type="site" description="Essential for 2'-O-methyltransferase activity" evidence="18">
    <location>
        <position position="2672"/>
    </location>
</feature>
<feature type="site" description="mRNA cap binding" evidence="18">
    <location>
        <position position="2703"/>
    </location>
</feature>
<feature type="site" description="mRNA cap binding" evidence="18">
    <location>
        <position position="2705"/>
    </location>
</feature>
<feature type="site" description="Essential for 2'-O-methyltransferase activity" evidence="18">
    <location>
        <position position="2708"/>
    </location>
</feature>
<feature type="modified residue" description="N6-acetyllysine; by host" evidence="8">
    <location>
        <position position="1863"/>
    </location>
</feature>
<feature type="modified residue" description="Phosphoserine" evidence="1">
    <location>
        <position position="2547"/>
    </location>
</feature>
<feature type="glycosylation site" description="N-linked (GlcNAc...) asparagine; by host" evidence="12">
    <location>
        <position position="183"/>
    </location>
</feature>
<feature type="glycosylation site" description="N-linked (GlcNAc...) asparagine; by host" evidence="12">
    <location>
        <position position="347"/>
    </location>
</feature>
<feature type="glycosylation site" description="N-linked (GlcNAc...) asparagine; by host" evidence="12">
    <location>
        <position position="433"/>
    </location>
</feature>
<feature type="glycosylation site" description="N-linked (GlcNAc...) asparagine; by host" evidence="12">
    <location>
        <position position="905"/>
    </location>
</feature>
<feature type="glycosylation site" description="N-linked (GlcNAc...) asparagine; by host" evidence="12">
    <location>
        <position position="982"/>
    </location>
</feature>
<feature type="glycosylation site" description="N-linked (GlcNAc...) asparagine; by host" evidence="12">
    <location>
        <position position="1134"/>
    </location>
</feature>
<feature type="glycosylation site" description="N-linked (GlcNAc...) asparagine; by host" evidence="12">
    <location>
        <position position="2301"/>
    </location>
</feature>
<feature type="glycosylation site" description="N-linked (GlcNAc...) asparagine; by host" evidence="12">
    <location>
        <position position="2305"/>
    </location>
</feature>
<feature type="glycosylation site" description="N-linked (GlcNAc...) asparagine; by host" evidence="12">
    <location>
        <position position="2457"/>
    </location>
</feature>
<feature type="disulfide bond" evidence="5">
    <location>
        <begin position="283"/>
        <end position="310"/>
    </location>
</feature>
<feature type="disulfide bond" evidence="5">
    <location>
        <begin position="340"/>
        <end position="401"/>
    </location>
</feature>
<feature type="disulfide bond" evidence="5">
    <location>
        <begin position="354"/>
        <end position="385"/>
    </location>
</feature>
<feature type="disulfide bond" evidence="5">
    <location>
        <begin position="372"/>
        <end position="396"/>
    </location>
</feature>
<feature type="disulfide bond" evidence="5">
    <location>
        <begin position="465"/>
        <end position="565"/>
    </location>
</feature>
<feature type="disulfide bond" evidence="5">
    <location>
        <begin position="582"/>
        <end position="613"/>
    </location>
</feature>
<feature type="disulfide bond" evidence="5">
    <location>
        <begin position="779"/>
        <end position="790"/>
    </location>
</feature>
<feature type="disulfide bond" evidence="5">
    <location>
        <begin position="830"/>
        <end position="918"/>
    </location>
</feature>
<feature type="disulfide bond" evidence="5">
    <location>
        <begin position="954"/>
        <end position="998"/>
    </location>
</feature>
<feature type="disulfide bond" evidence="5">
    <location>
        <begin position="1055"/>
        <end position="1104"/>
    </location>
</feature>
<feature type="disulfide bond" evidence="5">
    <location>
        <begin position="1066"/>
        <end position="1088"/>
    </location>
</feature>
<feature type="disulfide bond" evidence="5">
    <location>
        <begin position="1087"/>
        <end position="1091"/>
    </location>
</feature>
<feature type="sequence conflict" description="In Ref. 3; AAA66406." evidence="19" ref="3">
    <original>H</original>
    <variation>D</variation>
    <location>
        <position position="1044"/>
    </location>
</feature>
<feature type="sequence conflict" description="In Ref. 3; AAA66406." evidence="19" ref="3">
    <original>A</original>
    <variation>T</variation>
    <location>
        <position position="1231"/>
    </location>
</feature>
<feature type="sequence conflict" description="In Ref. 3; AAA66406." evidence="19" ref="3">
    <original>A</original>
    <variation>V</variation>
    <location>
        <position position="1236"/>
    </location>
</feature>
<feature type="sequence conflict" description="In Ref. 3; AAA66406." evidence="19" ref="3">
    <original>I</original>
    <variation>M</variation>
    <location>
        <position position="1263"/>
    </location>
</feature>
<feature type="sequence conflict" description="In Ref. 3; AAA66406." evidence="19" ref="3">
    <original>N</original>
    <variation>K</variation>
    <location>
        <position position="1266"/>
    </location>
</feature>
<feature type="sequence conflict" description="In Ref. 3; AAA66406." evidence="19" ref="3">
    <original>A</original>
    <variation>V</variation>
    <location>
        <position position="1301"/>
    </location>
</feature>
<feature type="sequence conflict" description="In Ref. 3; AAA66406." evidence="19" ref="3">
    <original>L</original>
    <variation>F</variation>
    <location>
        <position position="1308"/>
    </location>
</feature>
<feature type="sequence conflict" description="In Ref. 3; AAA66406." evidence="19" ref="3">
    <original>S</original>
    <variation>N</variation>
    <location>
        <position position="1342"/>
    </location>
</feature>
<feature type="sequence conflict" description="In Ref. 3; AAA66406." evidence="19" ref="3">
    <original>V</original>
    <variation>L</variation>
    <location>
        <position position="1454"/>
    </location>
</feature>
<feature type="sequence conflict" description="In Ref. 3; AAA66406." evidence="19" ref="3">
    <original>R</original>
    <variation>K</variation>
    <location>
        <position position="1503"/>
    </location>
</feature>
<feature type="sequence conflict" description="In Ref. 3; AAA66406." evidence="19" ref="3">
    <original>ISY</original>
    <variation>VSC</variation>
    <location>
        <begin position="1552"/>
        <end position="1554"/>
    </location>
</feature>
<feature type="sequence conflict" description="In Ref. 3; AAA66406." evidence="19" ref="3">
    <original>T</original>
    <variation>A</variation>
    <location>
        <position position="1595"/>
    </location>
</feature>
<feature type="sequence conflict" description="In Ref. 3; AAA66406." evidence="19" ref="3">
    <original>VDR</original>
    <variation>IDK</variation>
    <location>
        <begin position="1615"/>
        <end position="1617"/>
    </location>
</feature>
<feature type="sequence conflict" description="In Ref. 3; AAA66406." evidence="19" ref="3">
    <original>KR</original>
    <variation>RK</variation>
    <location>
        <begin position="1661"/>
        <end position="1662"/>
    </location>
</feature>
<feature type="sequence conflict" description="In Ref. 3; AAA66406." evidence="19" ref="3">
    <original>E</original>
    <variation>G</variation>
    <location>
        <position position="1685"/>
    </location>
</feature>
<feature type="sequence conflict" description="In Ref. 3; AAA66406." evidence="19" ref="3">
    <original>N</original>
    <variation>S</variation>
    <location>
        <position position="1820"/>
    </location>
</feature>
<feature type="sequence conflict" description="In Ref. 3; AAA66406." evidence="19" ref="3">
    <original>I</original>
    <variation>T</variation>
    <location>
        <position position="1846"/>
    </location>
</feature>
<feature type="sequence conflict" description="In Ref. 3; AAA66406." evidence="19" ref="3">
    <original>I</original>
    <variation>T</variation>
    <location>
        <position position="1858"/>
    </location>
</feature>
<feature type="sequence conflict" description="In Ref. 3; AAA66406." evidence="19" ref="3">
    <original>A</original>
    <variation>T</variation>
    <location>
        <position position="1874"/>
    </location>
</feature>
<feature type="sequence conflict" description="In Ref. 3; AAA66406." evidence="19" ref="3">
    <original>D</original>
    <variation>N</variation>
    <location>
        <position position="1878"/>
    </location>
</feature>
<feature type="sequence conflict" description="In Ref. 3; AAA66406." evidence="19" ref="3">
    <original>K</original>
    <variation>R</variation>
    <location>
        <position position="2169"/>
    </location>
</feature>
<feature type="sequence conflict" description="In Ref. 3; AAA66406." evidence="19" ref="3">
    <original>ES</original>
    <variation>QP</variation>
    <location>
        <begin position="2265"/>
        <end position="2266"/>
    </location>
</feature>
<feature type="sequence conflict" description="In Ref. 3; AAA66406." evidence="19" ref="3">
    <original>IH</original>
    <variation>MD</variation>
    <location>
        <begin position="2330"/>
        <end position="2331"/>
    </location>
</feature>
<feature type="sequence conflict" description="In Ref. 3; AAA66406." evidence="19" ref="3">
    <original>L</original>
    <variation>F</variation>
    <location>
        <position position="2355"/>
    </location>
</feature>
<feature type="sequence conflict" description="In Ref. 3; AAA66406." evidence="19" ref="3">
    <original>DG</original>
    <variation>GR</variation>
    <location>
        <begin position="2391"/>
        <end position="2392"/>
    </location>
</feature>
<feature type="sequence conflict" description="In Ref. 3; AAA66406." evidence="19" ref="3">
    <original>I</original>
    <variation>V</variation>
    <location>
        <position position="2418"/>
    </location>
</feature>
<feature type="sequence conflict" description="In Ref. 3; AAA66406." evidence="19" ref="3">
    <original>I</original>
    <variation>V</variation>
    <location>
        <position position="2647"/>
    </location>
</feature>
<feature type="sequence conflict" description="In Ref. 3; AAA66406." evidence="19" ref="3">
    <original>T</original>
    <variation>A</variation>
    <location>
        <position position="2687"/>
    </location>
</feature>
<feature type="helix" evidence="21">
    <location>
        <begin position="26"/>
        <end position="32"/>
    </location>
</feature>
<feature type="helix" evidence="21">
    <location>
        <begin position="35"/>
        <end position="39"/>
    </location>
</feature>
<feature type="helix" evidence="21">
    <location>
        <begin position="44"/>
        <end position="56"/>
    </location>
</feature>
<feature type="helix" evidence="21">
    <location>
        <begin position="63"/>
        <end position="69"/>
    </location>
</feature>
<feature type="helix" evidence="21">
    <location>
        <begin position="74"/>
        <end position="98"/>
    </location>
</feature>
<feature type="strand" evidence="20">
    <location>
        <begin position="586"/>
        <end position="588"/>
    </location>
</feature>
<feature type="strand" evidence="20">
    <location>
        <begin position="600"/>
        <end position="606"/>
    </location>
</feature>
<feature type="strand" evidence="20">
    <location>
        <begin position="608"/>
        <end position="610"/>
    </location>
</feature>
<feature type="strand" evidence="20">
    <location>
        <begin position="612"/>
        <end position="614"/>
    </location>
</feature>
<feature type="strand" evidence="20">
    <location>
        <begin position="617"/>
        <end position="620"/>
    </location>
</feature>
<feature type="strand" evidence="20">
    <location>
        <begin position="630"/>
        <end position="635"/>
    </location>
</feature>
<feature type="strand" evidence="20">
    <location>
        <begin position="645"/>
        <end position="650"/>
    </location>
</feature>
<feature type="strand" evidence="20">
    <location>
        <begin position="653"/>
        <end position="661"/>
    </location>
</feature>
<feature type="strand" evidence="20">
    <location>
        <begin position="663"/>
        <end position="665"/>
    </location>
</feature>
<feature type="strand" evidence="20">
    <location>
        <begin position="667"/>
        <end position="673"/>
    </location>
</feature>